<protein>
    <recommendedName>
        <fullName evidence="1">Methionine import ATP-binding protein MetN 2</fullName>
        <ecNumber evidence="1">7.4.2.11</ecNumber>
    </recommendedName>
</protein>
<dbReference type="EC" id="7.4.2.11" evidence="1"/>
<dbReference type="EMBL" id="CP000029">
    <property type="protein sequence ID" value="AAW53848.1"/>
    <property type="molecule type" value="Genomic_DNA"/>
</dbReference>
<dbReference type="RefSeq" id="WP_002456122.1">
    <property type="nucleotide sequence ID" value="NC_002976.3"/>
</dbReference>
<dbReference type="SMR" id="Q5HQQ9"/>
<dbReference type="STRING" id="176279.SERP0489"/>
<dbReference type="KEGG" id="ser:SERP0489"/>
<dbReference type="eggNOG" id="COG1135">
    <property type="taxonomic scope" value="Bacteria"/>
</dbReference>
<dbReference type="HOGENOM" id="CLU_000604_1_3_9"/>
<dbReference type="Proteomes" id="UP000000531">
    <property type="component" value="Chromosome"/>
</dbReference>
<dbReference type="GO" id="GO:0005886">
    <property type="term" value="C:plasma membrane"/>
    <property type="evidence" value="ECO:0007669"/>
    <property type="project" value="UniProtKB-SubCell"/>
</dbReference>
<dbReference type="GO" id="GO:0033232">
    <property type="term" value="F:ABC-type D-methionine transporter activity"/>
    <property type="evidence" value="ECO:0007669"/>
    <property type="project" value="UniProtKB-EC"/>
</dbReference>
<dbReference type="GO" id="GO:0005524">
    <property type="term" value="F:ATP binding"/>
    <property type="evidence" value="ECO:0007669"/>
    <property type="project" value="UniProtKB-KW"/>
</dbReference>
<dbReference type="GO" id="GO:0016887">
    <property type="term" value="F:ATP hydrolysis activity"/>
    <property type="evidence" value="ECO:0007669"/>
    <property type="project" value="InterPro"/>
</dbReference>
<dbReference type="CDD" id="cd03258">
    <property type="entry name" value="ABC_MetN_methionine_transporter"/>
    <property type="match status" value="1"/>
</dbReference>
<dbReference type="FunFam" id="3.40.50.300:FF:000056">
    <property type="entry name" value="Cell division ATP-binding protein FtsE"/>
    <property type="match status" value="1"/>
</dbReference>
<dbReference type="Gene3D" id="3.30.70.260">
    <property type="match status" value="1"/>
</dbReference>
<dbReference type="Gene3D" id="3.40.50.300">
    <property type="entry name" value="P-loop containing nucleotide triphosphate hydrolases"/>
    <property type="match status" value="1"/>
</dbReference>
<dbReference type="InterPro" id="IPR003593">
    <property type="entry name" value="AAA+_ATPase"/>
</dbReference>
<dbReference type="InterPro" id="IPR003439">
    <property type="entry name" value="ABC_transporter-like_ATP-bd"/>
</dbReference>
<dbReference type="InterPro" id="IPR017871">
    <property type="entry name" value="ABC_transporter-like_CS"/>
</dbReference>
<dbReference type="InterPro" id="IPR045865">
    <property type="entry name" value="ACT-like_dom_sf"/>
</dbReference>
<dbReference type="InterPro" id="IPR041701">
    <property type="entry name" value="MetN_ABC"/>
</dbReference>
<dbReference type="InterPro" id="IPR050086">
    <property type="entry name" value="MetN_ABC_transporter-like"/>
</dbReference>
<dbReference type="InterPro" id="IPR018449">
    <property type="entry name" value="NIL_domain"/>
</dbReference>
<dbReference type="InterPro" id="IPR027417">
    <property type="entry name" value="P-loop_NTPase"/>
</dbReference>
<dbReference type="PANTHER" id="PTHR43166">
    <property type="entry name" value="AMINO ACID IMPORT ATP-BINDING PROTEIN"/>
    <property type="match status" value="1"/>
</dbReference>
<dbReference type="PANTHER" id="PTHR43166:SF36">
    <property type="entry name" value="METHIONINE IMPORT ATP-BINDING PROTEIN METN 2"/>
    <property type="match status" value="1"/>
</dbReference>
<dbReference type="Pfam" id="PF00005">
    <property type="entry name" value="ABC_tran"/>
    <property type="match status" value="1"/>
</dbReference>
<dbReference type="Pfam" id="PF09383">
    <property type="entry name" value="NIL"/>
    <property type="match status" value="1"/>
</dbReference>
<dbReference type="SMART" id="SM00382">
    <property type="entry name" value="AAA"/>
    <property type="match status" value="1"/>
</dbReference>
<dbReference type="SMART" id="SM00930">
    <property type="entry name" value="NIL"/>
    <property type="match status" value="1"/>
</dbReference>
<dbReference type="SUPFAM" id="SSF55021">
    <property type="entry name" value="ACT-like"/>
    <property type="match status" value="1"/>
</dbReference>
<dbReference type="SUPFAM" id="SSF52540">
    <property type="entry name" value="P-loop containing nucleoside triphosphate hydrolases"/>
    <property type="match status" value="1"/>
</dbReference>
<dbReference type="PROSITE" id="PS00211">
    <property type="entry name" value="ABC_TRANSPORTER_1"/>
    <property type="match status" value="1"/>
</dbReference>
<dbReference type="PROSITE" id="PS50893">
    <property type="entry name" value="ABC_TRANSPORTER_2"/>
    <property type="match status" value="1"/>
</dbReference>
<dbReference type="PROSITE" id="PS51264">
    <property type="entry name" value="METN"/>
    <property type="match status" value="1"/>
</dbReference>
<feature type="chain" id="PRO_0000270408" description="Methionine import ATP-binding protein MetN 2">
    <location>
        <begin position="1"/>
        <end position="341"/>
    </location>
</feature>
<feature type="domain" description="ABC transporter" evidence="1">
    <location>
        <begin position="2"/>
        <end position="241"/>
    </location>
</feature>
<feature type="binding site" evidence="1">
    <location>
        <begin position="38"/>
        <end position="45"/>
    </location>
    <ligand>
        <name>ATP</name>
        <dbReference type="ChEBI" id="CHEBI:30616"/>
    </ligand>
</feature>
<sequence>MIKLNQIVKRYHTKDKDVLAVDHVDLNIESGSIFGVIGFSGAGKSTLIRMFNNLESPTSGEIIIDGDNISQLSKSQLRKKRQKVSMIFQHFNLLWSRSVLKNVTFPLEIAGVPSGLAKQKALELIELVGLKGRESAYPSELSGGQKQRVGIARALANDPDVLLCDEATSALDPQTTDEILDLLLKVREQQNLTIVLITHEMHVIRRICDEVAVMENGKVIEQGAVSKVFENPQHEVTKRFVKDDLNDDFEDSLEYLEPLDHDAYIVRLNFTGENTTEPIISYMTTTHNIDVNILEADIKNTKNGSFGFLVIHIPHISEEHFKQFKHNLHEQHVNVEVLKHG</sequence>
<comment type="function">
    <text evidence="1">Part of the ABC transporter complex MetNIQ involved in methionine import. Responsible for energy coupling to the transport system.</text>
</comment>
<comment type="catalytic activity">
    <reaction evidence="1">
        <text>L-methionine(out) + ATP + H2O = L-methionine(in) + ADP + phosphate + H(+)</text>
        <dbReference type="Rhea" id="RHEA:29779"/>
        <dbReference type="ChEBI" id="CHEBI:15377"/>
        <dbReference type="ChEBI" id="CHEBI:15378"/>
        <dbReference type="ChEBI" id="CHEBI:30616"/>
        <dbReference type="ChEBI" id="CHEBI:43474"/>
        <dbReference type="ChEBI" id="CHEBI:57844"/>
        <dbReference type="ChEBI" id="CHEBI:456216"/>
        <dbReference type="EC" id="7.4.2.11"/>
    </reaction>
</comment>
<comment type="catalytic activity">
    <reaction evidence="1">
        <text>D-methionine(out) + ATP + H2O = D-methionine(in) + ADP + phosphate + H(+)</text>
        <dbReference type="Rhea" id="RHEA:29767"/>
        <dbReference type="ChEBI" id="CHEBI:15377"/>
        <dbReference type="ChEBI" id="CHEBI:15378"/>
        <dbReference type="ChEBI" id="CHEBI:30616"/>
        <dbReference type="ChEBI" id="CHEBI:43474"/>
        <dbReference type="ChEBI" id="CHEBI:57932"/>
        <dbReference type="ChEBI" id="CHEBI:456216"/>
        <dbReference type="EC" id="7.4.2.11"/>
    </reaction>
</comment>
<comment type="subunit">
    <text evidence="1">The complex is composed of two ATP-binding proteins (MetN), two transmembrane proteins (MetI) and a solute-binding protein (MetQ).</text>
</comment>
<comment type="subcellular location">
    <subcellularLocation>
        <location evidence="1">Cell membrane</location>
        <topology evidence="1">Peripheral membrane protein</topology>
    </subcellularLocation>
</comment>
<comment type="similarity">
    <text evidence="1">Belongs to the ABC transporter superfamily. Methionine importer (TC 3.A.1.24) family.</text>
</comment>
<reference key="1">
    <citation type="journal article" date="2005" name="J. Bacteriol.">
        <title>Insights on evolution of virulence and resistance from the complete genome analysis of an early methicillin-resistant Staphylococcus aureus strain and a biofilm-producing methicillin-resistant Staphylococcus epidermidis strain.</title>
        <authorList>
            <person name="Gill S.R."/>
            <person name="Fouts D.E."/>
            <person name="Archer G.L."/>
            <person name="Mongodin E.F."/>
            <person name="DeBoy R.T."/>
            <person name="Ravel J."/>
            <person name="Paulsen I.T."/>
            <person name="Kolonay J.F."/>
            <person name="Brinkac L.M."/>
            <person name="Beanan M.J."/>
            <person name="Dodson R.J."/>
            <person name="Daugherty S.C."/>
            <person name="Madupu R."/>
            <person name="Angiuoli S.V."/>
            <person name="Durkin A.S."/>
            <person name="Haft D.H."/>
            <person name="Vamathevan J.J."/>
            <person name="Khouri H."/>
            <person name="Utterback T.R."/>
            <person name="Lee C."/>
            <person name="Dimitrov G."/>
            <person name="Jiang L."/>
            <person name="Qin H."/>
            <person name="Weidman J."/>
            <person name="Tran K."/>
            <person name="Kang K.H."/>
            <person name="Hance I.R."/>
            <person name="Nelson K.E."/>
            <person name="Fraser C.M."/>
        </authorList>
    </citation>
    <scope>NUCLEOTIDE SEQUENCE [LARGE SCALE GENOMIC DNA]</scope>
    <source>
        <strain>ATCC 35984 / DSM 28319 / BCRC 17069 / CCUG 31568 / BM 3577 / RP62A</strain>
    </source>
</reference>
<evidence type="ECO:0000255" key="1">
    <source>
        <dbReference type="HAMAP-Rule" id="MF_01719"/>
    </source>
</evidence>
<gene>
    <name evidence="1" type="primary">metN2</name>
    <name type="ordered locus">SERP0489</name>
</gene>
<organism>
    <name type="scientific">Staphylococcus epidermidis (strain ATCC 35984 / DSM 28319 / BCRC 17069 / CCUG 31568 / BM 3577 / RP62A)</name>
    <dbReference type="NCBI Taxonomy" id="176279"/>
    <lineage>
        <taxon>Bacteria</taxon>
        <taxon>Bacillati</taxon>
        <taxon>Bacillota</taxon>
        <taxon>Bacilli</taxon>
        <taxon>Bacillales</taxon>
        <taxon>Staphylococcaceae</taxon>
        <taxon>Staphylococcus</taxon>
    </lineage>
</organism>
<proteinExistence type="inferred from homology"/>
<keyword id="KW-0029">Amino-acid transport</keyword>
<keyword id="KW-0067">ATP-binding</keyword>
<keyword id="KW-1003">Cell membrane</keyword>
<keyword id="KW-0472">Membrane</keyword>
<keyword id="KW-0547">Nucleotide-binding</keyword>
<keyword id="KW-1185">Reference proteome</keyword>
<keyword id="KW-1278">Translocase</keyword>
<keyword id="KW-0813">Transport</keyword>
<accession>Q5HQQ9</accession>
<name>METN2_STAEQ</name>